<evidence type="ECO:0000255" key="1">
    <source>
        <dbReference type="HAMAP-Rule" id="MF_00634"/>
    </source>
</evidence>
<dbReference type="EMBL" id="CP001298">
    <property type="protein sequence ID" value="ACK83250.1"/>
    <property type="molecule type" value="Genomic_DNA"/>
</dbReference>
<dbReference type="RefSeq" id="WP_015950860.1">
    <property type="nucleotide sequence ID" value="NC_011757.1"/>
</dbReference>
<dbReference type="SMR" id="B7KZL8"/>
<dbReference type="KEGG" id="mch:Mchl_2407"/>
<dbReference type="HOGENOM" id="CLU_130694_3_0_5"/>
<dbReference type="Proteomes" id="UP000002385">
    <property type="component" value="Chromosome"/>
</dbReference>
<dbReference type="GO" id="GO:0005737">
    <property type="term" value="C:cytoplasm"/>
    <property type="evidence" value="ECO:0007669"/>
    <property type="project" value="TreeGrafter"/>
</dbReference>
<dbReference type="Gene3D" id="3.30.1200.10">
    <property type="entry name" value="YggU-like"/>
    <property type="match status" value="1"/>
</dbReference>
<dbReference type="HAMAP" id="MF_00634">
    <property type="entry name" value="UPF0235"/>
    <property type="match status" value="1"/>
</dbReference>
<dbReference type="InterPro" id="IPR003746">
    <property type="entry name" value="DUF167"/>
</dbReference>
<dbReference type="InterPro" id="IPR036591">
    <property type="entry name" value="YggU-like_sf"/>
</dbReference>
<dbReference type="NCBIfam" id="TIGR00251">
    <property type="entry name" value="DUF167 family protein"/>
    <property type="match status" value="1"/>
</dbReference>
<dbReference type="PANTHER" id="PTHR13420">
    <property type="entry name" value="UPF0235 PROTEIN C15ORF40"/>
    <property type="match status" value="1"/>
</dbReference>
<dbReference type="PANTHER" id="PTHR13420:SF7">
    <property type="entry name" value="UPF0235 PROTEIN C15ORF40"/>
    <property type="match status" value="1"/>
</dbReference>
<dbReference type="Pfam" id="PF02594">
    <property type="entry name" value="DUF167"/>
    <property type="match status" value="1"/>
</dbReference>
<dbReference type="SMART" id="SM01152">
    <property type="entry name" value="DUF167"/>
    <property type="match status" value="1"/>
</dbReference>
<dbReference type="SUPFAM" id="SSF69786">
    <property type="entry name" value="YggU-like"/>
    <property type="match status" value="1"/>
</dbReference>
<sequence>MTQSPFTLEANGLVLAVRLTPRASRTGLDGVRTEASGRPVLSLRVAAPPVEGAANAALTAFVAKSLGLRKAEVTLLSGETSRTKRLHLSGDPQMLAARVEAWLGG</sequence>
<proteinExistence type="inferred from homology"/>
<reference key="1">
    <citation type="submission" date="2008-12" db="EMBL/GenBank/DDBJ databases">
        <title>Complete sequence of chromosome of Methylobacterium chloromethanicum CM4.</title>
        <authorList>
            <consortium name="US DOE Joint Genome Institute"/>
            <person name="Lucas S."/>
            <person name="Copeland A."/>
            <person name="Lapidus A."/>
            <person name="Glavina del Rio T."/>
            <person name="Dalin E."/>
            <person name="Tice H."/>
            <person name="Bruce D."/>
            <person name="Goodwin L."/>
            <person name="Pitluck S."/>
            <person name="Chertkov O."/>
            <person name="Brettin T."/>
            <person name="Detter J.C."/>
            <person name="Han C."/>
            <person name="Larimer F."/>
            <person name="Land M."/>
            <person name="Hauser L."/>
            <person name="Kyrpides N."/>
            <person name="Mikhailova N."/>
            <person name="Marx C."/>
            <person name="Richardson P."/>
        </authorList>
    </citation>
    <scope>NUCLEOTIDE SEQUENCE [LARGE SCALE GENOMIC DNA]</scope>
    <source>
        <strain>CM4 / NCIMB 13688</strain>
    </source>
</reference>
<protein>
    <recommendedName>
        <fullName evidence="1">UPF0235 protein Mchl_2407</fullName>
    </recommendedName>
</protein>
<organism>
    <name type="scientific">Methylorubrum extorquens (strain CM4 / NCIMB 13688)</name>
    <name type="common">Methylobacterium extorquens</name>
    <dbReference type="NCBI Taxonomy" id="440085"/>
    <lineage>
        <taxon>Bacteria</taxon>
        <taxon>Pseudomonadati</taxon>
        <taxon>Pseudomonadota</taxon>
        <taxon>Alphaproteobacteria</taxon>
        <taxon>Hyphomicrobiales</taxon>
        <taxon>Methylobacteriaceae</taxon>
        <taxon>Methylorubrum</taxon>
    </lineage>
</organism>
<feature type="chain" id="PRO_1000212349" description="UPF0235 protein Mchl_2407">
    <location>
        <begin position="1"/>
        <end position="105"/>
    </location>
</feature>
<comment type="similarity">
    <text evidence="1">Belongs to the UPF0235 family.</text>
</comment>
<name>Y2407_METC4</name>
<gene>
    <name type="ordered locus">Mchl_2407</name>
</gene>
<accession>B7KZL8</accession>